<evidence type="ECO:0000255" key="1">
    <source>
        <dbReference type="HAMAP-Rule" id="MF_03019"/>
    </source>
</evidence>
<accession>Q4P2Q7</accession>
<accession>A0A0D1CI46</accession>
<gene>
    <name evidence="1" type="primary">BNA1</name>
    <name type="ORF">UMAG_05606</name>
</gene>
<sequence>MPFPLPLNFPKWLSENEHLLQPPVGNFCLFRTRDYTVMAVGGPNARSDYHYQPTEEFFYQYKGDMLLKVIDEDGKFQDIPIKQGEMFMLPAHTPHSPVRFANTVGIVVERTRPDGSPDAMRWYCPNKEAHGETPTLVKEVHFQCTDLGTQLKPIIDAWVNDEAGRQCSHCGYTQGARELPA</sequence>
<dbReference type="EC" id="1.13.11.6" evidence="1"/>
<dbReference type="EMBL" id="CM003157">
    <property type="protein sequence ID" value="KIS66618.1"/>
    <property type="molecule type" value="Genomic_DNA"/>
</dbReference>
<dbReference type="RefSeq" id="XP_011391905.1">
    <property type="nucleotide sequence ID" value="XM_011393603.1"/>
</dbReference>
<dbReference type="SMR" id="Q4P2Q7"/>
<dbReference type="STRING" id="237631.Q4P2Q7"/>
<dbReference type="EnsemblFungi" id="KIS66618">
    <property type="protein sequence ID" value="KIS66618"/>
    <property type="gene ID" value="UMAG_05606"/>
</dbReference>
<dbReference type="GeneID" id="23565454"/>
<dbReference type="KEGG" id="uma:UMAG_05606"/>
<dbReference type="VEuPathDB" id="FungiDB:UMAG_05606"/>
<dbReference type="eggNOG" id="KOG3995">
    <property type="taxonomic scope" value="Eukaryota"/>
</dbReference>
<dbReference type="HOGENOM" id="CLU_095765_0_0_1"/>
<dbReference type="InParanoid" id="Q4P2Q7"/>
<dbReference type="OMA" id="KPPVGNQ"/>
<dbReference type="OrthoDB" id="204928at2759"/>
<dbReference type="UniPathway" id="UPA00253">
    <property type="reaction ID" value="UER00330"/>
</dbReference>
<dbReference type="Proteomes" id="UP000000561">
    <property type="component" value="Chromosome 18"/>
</dbReference>
<dbReference type="GO" id="GO:0005737">
    <property type="term" value="C:cytoplasm"/>
    <property type="evidence" value="ECO:0000318"/>
    <property type="project" value="GO_Central"/>
</dbReference>
<dbReference type="GO" id="GO:0000334">
    <property type="term" value="F:3-hydroxyanthranilate 3,4-dioxygenase activity"/>
    <property type="evidence" value="ECO:0000318"/>
    <property type="project" value="GO_Central"/>
</dbReference>
<dbReference type="GO" id="GO:0008198">
    <property type="term" value="F:ferrous iron binding"/>
    <property type="evidence" value="ECO:0007669"/>
    <property type="project" value="UniProtKB-UniRule"/>
</dbReference>
<dbReference type="GO" id="GO:0034354">
    <property type="term" value="P:'de novo' NAD biosynthetic process from L-tryptophan"/>
    <property type="evidence" value="ECO:0000318"/>
    <property type="project" value="GO_Central"/>
</dbReference>
<dbReference type="GO" id="GO:0043420">
    <property type="term" value="P:anthranilate metabolic process"/>
    <property type="evidence" value="ECO:0007669"/>
    <property type="project" value="UniProtKB-UniRule"/>
</dbReference>
<dbReference type="GO" id="GO:0006569">
    <property type="term" value="P:L-tryptophan catabolic process"/>
    <property type="evidence" value="ECO:0007669"/>
    <property type="project" value="UniProtKB-UniRule"/>
</dbReference>
<dbReference type="GO" id="GO:0019805">
    <property type="term" value="P:quinolinate biosynthetic process"/>
    <property type="evidence" value="ECO:0007669"/>
    <property type="project" value="UniProtKB-UniRule"/>
</dbReference>
<dbReference type="GO" id="GO:0046874">
    <property type="term" value="P:quinolinate metabolic process"/>
    <property type="evidence" value="ECO:0000318"/>
    <property type="project" value="GO_Central"/>
</dbReference>
<dbReference type="CDD" id="cd06123">
    <property type="entry name" value="cupin_HAO"/>
    <property type="match status" value="1"/>
</dbReference>
<dbReference type="FunFam" id="2.60.120.10:FF:000131">
    <property type="entry name" value="3-hydroxyanthranilate 3,4-dioxygenase"/>
    <property type="match status" value="1"/>
</dbReference>
<dbReference type="Gene3D" id="2.60.120.10">
    <property type="entry name" value="Jelly Rolls"/>
    <property type="match status" value="1"/>
</dbReference>
<dbReference type="HAMAP" id="MF_00825">
    <property type="entry name" value="3_HAO"/>
    <property type="match status" value="1"/>
</dbReference>
<dbReference type="InterPro" id="IPR010329">
    <property type="entry name" value="3hydroanth_dOase"/>
</dbReference>
<dbReference type="InterPro" id="IPR014710">
    <property type="entry name" value="RmlC-like_jellyroll"/>
</dbReference>
<dbReference type="InterPro" id="IPR011051">
    <property type="entry name" value="RmlC_Cupin_sf"/>
</dbReference>
<dbReference type="NCBIfam" id="TIGR03037">
    <property type="entry name" value="anthran_nbaC"/>
    <property type="match status" value="1"/>
</dbReference>
<dbReference type="PANTHER" id="PTHR15497">
    <property type="entry name" value="3-HYDROXYANTHRANILATE 3,4-DIOXYGENASE"/>
    <property type="match status" value="1"/>
</dbReference>
<dbReference type="PANTHER" id="PTHR15497:SF1">
    <property type="entry name" value="3-HYDROXYANTHRANILATE 3,4-DIOXYGENASE"/>
    <property type="match status" value="1"/>
</dbReference>
<dbReference type="Pfam" id="PF06052">
    <property type="entry name" value="3-HAO"/>
    <property type="match status" value="1"/>
</dbReference>
<dbReference type="SUPFAM" id="SSF51182">
    <property type="entry name" value="RmlC-like cupins"/>
    <property type="match status" value="1"/>
</dbReference>
<proteinExistence type="inferred from homology"/>
<comment type="function">
    <text evidence="1">Catalyzes the oxidative ring opening of 3-hydroxyanthranilate to 2-amino-3-carboxymuconate semialdehyde, which spontaneously cyclizes to quinolinate.</text>
</comment>
<comment type="catalytic activity">
    <reaction evidence="1">
        <text>3-hydroxyanthranilate + O2 = (2Z,4Z)-2-amino-3-carboxymuconate 6-semialdehyde</text>
        <dbReference type="Rhea" id="RHEA:17953"/>
        <dbReference type="ChEBI" id="CHEBI:15379"/>
        <dbReference type="ChEBI" id="CHEBI:36559"/>
        <dbReference type="ChEBI" id="CHEBI:77612"/>
        <dbReference type="EC" id="1.13.11.6"/>
    </reaction>
</comment>
<comment type="cofactor">
    <cofactor evidence="1">
        <name>Fe(2+)</name>
        <dbReference type="ChEBI" id="CHEBI:29033"/>
    </cofactor>
</comment>
<comment type="pathway">
    <text evidence="1">Cofactor biosynthesis; NAD(+) biosynthesis; quinolinate from L-kynurenine: step 3/3.</text>
</comment>
<comment type="subcellular location">
    <subcellularLocation>
        <location evidence="1">Cytoplasm</location>
    </subcellularLocation>
</comment>
<comment type="similarity">
    <text evidence="1">Belongs to the 3-HAO family.</text>
</comment>
<name>3HAO_MYCMD</name>
<keyword id="KW-0963">Cytoplasm</keyword>
<keyword id="KW-0223">Dioxygenase</keyword>
<keyword id="KW-0408">Iron</keyword>
<keyword id="KW-0479">Metal-binding</keyword>
<keyword id="KW-0560">Oxidoreductase</keyword>
<keyword id="KW-0662">Pyridine nucleotide biosynthesis</keyword>
<keyword id="KW-1185">Reference proteome</keyword>
<protein>
    <recommendedName>
        <fullName evidence="1">3-hydroxyanthranilate 3,4-dioxygenase</fullName>
        <ecNumber evidence="1">1.13.11.6</ecNumber>
    </recommendedName>
    <alternativeName>
        <fullName evidence="1">3-hydroxyanthranilate oxygenase</fullName>
        <shortName evidence="1">3-HAO</shortName>
    </alternativeName>
    <alternativeName>
        <fullName evidence="1">3-hydroxyanthranilic acid dioxygenase</fullName>
        <shortName evidence="1">HAD</shortName>
    </alternativeName>
    <alternativeName>
        <fullName evidence="1">Biosynthesis of nicotinic acid protein 1</fullName>
    </alternativeName>
</protein>
<organism>
    <name type="scientific">Mycosarcoma maydis</name>
    <name type="common">Corn smut fungus</name>
    <name type="synonym">Ustilago maydis</name>
    <dbReference type="NCBI Taxonomy" id="5270"/>
    <lineage>
        <taxon>Eukaryota</taxon>
        <taxon>Fungi</taxon>
        <taxon>Dikarya</taxon>
        <taxon>Basidiomycota</taxon>
        <taxon>Ustilaginomycotina</taxon>
        <taxon>Ustilaginomycetes</taxon>
        <taxon>Ustilaginales</taxon>
        <taxon>Ustilaginaceae</taxon>
        <taxon>Mycosarcoma</taxon>
    </lineage>
</organism>
<feature type="chain" id="PRO_0000361995" description="3-hydroxyanthranilate 3,4-dioxygenase">
    <location>
        <begin position="1"/>
        <end position="181"/>
    </location>
</feature>
<feature type="binding site" evidence="1">
    <location>
        <position position="46"/>
    </location>
    <ligand>
        <name>O2</name>
        <dbReference type="ChEBI" id="CHEBI:15379"/>
    </ligand>
</feature>
<feature type="binding site" evidence="1">
    <location>
        <position position="50"/>
    </location>
    <ligand>
        <name>Fe cation</name>
        <dbReference type="ChEBI" id="CHEBI:24875"/>
        <note>catalytic</note>
    </ligand>
</feature>
<feature type="binding site" evidence="1">
    <location>
        <position position="56"/>
    </location>
    <ligand>
        <name>Fe cation</name>
        <dbReference type="ChEBI" id="CHEBI:24875"/>
        <note>catalytic</note>
    </ligand>
</feature>
<feature type="binding site" evidence="1">
    <location>
        <position position="56"/>
    </location>
    <ligand>
        <name>substrate</name>
    </ligand>
</feature>
<feature type="binding site" evidence="1">
    <location>
        <position position="95"/>
    </location>
    <ligand>
        <name>Fe cation</name>
        <dbReference type="ChEBI" id="CHEBI:24875"/>
        <note>catalytic</note>
    </ligand>
</feature>
<feature type="binding site" evidence="1">
    <location>
        <position position="99"/>
    </location>
    <ligand>
        <name>substrate</name>
    </ligand>
</feature>
<feature type="binding site" evidence="1">
    <location>
        <position position="109"/>
    </location>
    <ligand>
        <name>substrate</name>
    </ligand>
</feature>
<reference key="1">
    <citation type="journal article" date="2006" name="Nature">
        <title>Insights from the genome of the biotrophic fungal plant pathogen Ustilago maydis.</title>
        <authorList>
            <person name="Kaemper J."/>
            <person name="Kahmann R."/>
            <person name="Boelker M."/>
            <person name="Ma L.-J."/>
            <person name="Brefort T."/>
            <person name="Saville B.J."/>
            <person name="Banuett F."/>
            <person name="Kronstad J.W."/>
            <person name="Gold S.E."/>
            <person name="Mueller O."/>
            <person name="Perlin M.H."/>
            <person name="Woesten H.A.B."/>
            <person name="de Vries R."/>
            <person name="Ruiz-Herrera J."/>
            <person name="Reynaga-Pena C.G."/>
            <person name="Snetselaar K."/>
            <person name="McCann M."/>
            <person name="Perez-Martin J."/>
            <person name="Feldbruegge M."/>
            <person name="Basse C.W."/>
            <person name="Steinberg G."/>
            <person name="Ibeas J.I."/>
            <person name="Holloman W."/>
            <person name="Guzman P."/>
            <person name="Farman M.L."/>
            <person name="Stajich J.E."/>
            <person name="Sentandreu R."/>
            <person name="Gonzalez-Prieto J.M."/>
            <person name="Kennell J.C."/>
            <person name="Molina L."/>
            <person name="Schirawski J."/>
            <person name="Mendoza-Mendoza A."/>
            <person name="Greilinger D."/>
            <person name="Muench K."/>
            <person name="Roessel N."/>
            <person name="Scherer M."/>
            <person name="Vranes M."/>
            <person name="Ladendorf O."/>
            <person name="Vincon V."/>
            <person name="Fuchs U."/>
            <person name="Sandrock B."/>
            <person name="Meng S."/>
            <person name="Ho E.C.H."/>
            <person name="Cahill M.J."/>
            <person name="Boyce K.J."/>
            <person name="Klose J."/>
            <person name="Klosterman S.J."/>
            <person name="Deelstra H.J."/>
            <person name="Ortiz-Castellanos L."/>
            <person name="Li W."/>
            <person name="Sanchez-Alonso P."/>
            <person name="Schreier P.H."/>
            <person name="Haeuser-Hahn I."/>
            <person name="Vaupel M."/>
            <person name="Koopmann E."/>
            <person name="Friedrich G."/>
            <person name="Voss H."/>
            <person name="Schlueter T."/>
            <person name="Margolis J."/>
            <person name="Platt D."/>
            <person name="Swimmer C."/>
            <person name="Gnirke A."/>
            <person name="Chen F."/>
            <person name="Vysotskaia V."/>
            <person name="Mannhaupt G."/>
            <person name="Gueldener U."/>
            <person name="Muensterkoetter M."/>
            <person name="Haase D."/>
            <person name="Oesterheld M."/>
            <person name="Mewes H.-W."/>
            <person name="Mauceli E.W."/>
            <person name="DeCaprio D."/>
            <person name="Wade C.M."/>
            <person name="Butler J."/>
            <person name="Young S.K."/>
            <person name="Jaffe D.B."/>
            <person name="Calvo S.E."/>
            <person name="Nusbaum C."/>
            <person name="Galagan J.E."/>
            <person name="Birren B.W."/>
        </authorList>
    </citation>
    <scope>NUCLEOTIDE SEQUENCE [LARGE SCALE GENOMIC DNA]</scope>
    <source>
        <strain>DSM 14603 / FGSC 9021 / UM521</strain>
    </source>
</reference>
<reference key="2">
    <citation type="submission" date="2014-09" db="EMBL/GenBank/DDBJ databases">
        <authorList>
            <person name="Gueldener U."/>
            <person name="Muensterkoetter M."/>
            <person name="Walter M.C."/>
            <person name="Mannhaupt G."/>
            <person name="Kahmann R."/>
        </authorList>
    </citation>
    <scope>GENOME REANNOTATION</scope>
    <source>
        <strain>DSM 14603 / FGSC 9021 / UM521</strain>
    </source>
</reference>